<proteinExistence type="inferred from homology"/>
<keyword id="KW-0030">Aminoacyl-tRNA synthetase</keyword>
<keyword id="KW-0067">ATP-binding</keyword>
<keyword id="KW-0963">Cytoplasm</keyword>
<keyword id="KW-0436">Ligase</keyword>
<keyword id="KW-0479">Metal-binding</keyword>
<keyword id="KW-0547">Nucleotide-binding</keyword>
<keyword id="KW-0648">Protein biosynthesis</keyword>
<keyword id="KW-1185">Reference proteome</keyword>
<keyword id="KW-0862">Zinc</keyword>
<gene>
    <name evidence="1" type="primary">ileS</name>
    <name type="ordered locus">Ldb0748</name>
</gene>
<reference key="1">
    <citation type="journal article" date="2006" name="Proc. Natl. Acad. Sci. U.S.A.">
        <title>The complete genome sequence of Lactobacillus bulgaricus reveals extensive and ongoing reductive evolution.</title>
        <authorList>
            <person name="van de Guchte M."/>
            <person name="Penaud S."/>
            <person name="Grimaldi C."/>
            <person name="Barbe V."/>
            <person name="Bryson K."/>
            <person name="Nicolas P."/>
            <person name="Robert C."/>
            <person name="Oztas S."/>
            <person name="Mangenot S."/>
            <person name="Couloux A."/>
            <person name="Loux V."/>
            <person name="Dervyn R."/>
            <person name="Bossy R."/>
            <person name="Bolotin A."/>
            <person name="Batto J.-M."/>
            <person name="Walunas T."/>
            <person name="Gibrat J.-F."/>
            <person name="Bessieres P."/>
            <person name="Weissenbach J."/>
            <person name="Ehrlich S.D."/>
            <person name="Maguin E."/>
        </authorList>
    </citation>
    <scope>NUCLEOTIDE SEQUENCE [LARGE SCALE GENOMIC DNA]</scope>
    <source>
        <strain>ATCC 11842 / DSM 20081 / BCRC 10696 / JCM 1002 / NBRC 13953 / NCIMB 11778 / NCTC 12712 / WDCM 00102 / Lb 14</strain>
    </source>
</reference>
<feature type="chain" id="PRO_1000022083" description="Isoleucine--tRNA ligase">
    <location>
        <begin position="1"/>
        <end position="931"/>
    </location>
</feature>
<feature type="short sequence motif" description="'HIGH' region">
    <location>
        <begin position="57"/>
        <end position="67"/>
    </location>
</feature>
<feature type="short sequence motif" description="'KMSKS' region">
    <location>
        <begin position="597"/>
        <end position="601"/>
    </location>
</feature>
<feature type="binding site" evidence="1">
    <location>
        <position position="556"/>
    </location>
    <ligand>
        <name>L-isoleucyl-5'-AMP</name>
        <dbReference type="ChEBI" id="CHEBI:178002"/>
    </ligand>
</feature>
<feature type="binding site" evidence="1">
    <location>
        <position position="600"/>
    </location>
    <ligand>
        <name>ATP</name>
        <dbReference type="ChEBI" id="CHEBI:30616"/>
    </ligand>
</feature>
<feature type="binding site" evidence="1">
    <location>
        <position position="890"/>
    </location>
    <ligand>
        <name>Zn(2+)</name>
        <dbReference type="ChEBI" id="CHEBI:29105"/>
    </ligand>
</feature>
<feature type="binding site" evidence="1">
    <location>
        <position position="893"/>
    </location>
    <ligand>
        <name>Zn(2+)</name>
        <dbReference type="ChEBI" id="CHEBI:29105"/>
    </ligand>
</feature>
<feature type="binding site" evidence="1">
    <location>
        <position position="910"/>
    </location>
    <ligand>
        <name>Zn(2+)</name>
        <dbReference type="ChEBI" id="CHEBI:29105"/>
    </ligand>
</feature>
<feature type="binding site" evidence="1">
    <location>
        <position position="913"/>
    </location>
    <ligand>
        <name>Zn(2+)</name>
        <dbReference type="ChEBI" id="CHEBI:29105"/>
    </ligand>
</feature>
<organism>
    <name type="scientific">Lactobacillus delbrueckii subsp. bulgaricus (strain ATCC 11842 / DSM 20081 / BCRC 10696 / JCM 1002 / NBRC 13953 / NCIMB 11778 / NCTC 12712 / WDCM 00102 / Lb 14)</name>
    <dbReference type="NCBI Taxonomy" id="390333"/>
    <lineage>
        <taxon>Bacteria</taxon>
        <taxon>Bacillati</taxon>
        <taxon>Bacillota</taxon>
        <taxon>Bacilli</taxon>
        <taxon>Lactobacillales</taxon>
        <taxon>Lactobacillaceae</taxon>
        <taxon>Lactobacillus</taxon>
    </lineage>
</organism>
<evidence type="ECO:0000255" key="1">
    <source>
        <dbReference type="HAMAP-Rule" id="MF_02002"/>
    </source>
</evidence>
<comment type="function">
    <text evidence="1">Catalyzes the attachment of isoleucine to tRNA(Ile). As IleRS can inadvertently accommodate and process structurally similar amino acids such as valine, to avoid such errors it has two additional distinct tRNA(Ile)-dependent editing activities. One activity is designated as 'pretransfer' editing and involves the hydrolysis of activated Val-AMP. The other activity is designated 'posttransfer' editing and involves deacylation of mischarged Val-tRNA(Ile).</text>
</comment>
<comment type="catalytic activity">
    <reaction evidence="1">
        <text>tRNA(Ile) + L-isoleucine + ATP = L-isoleucyl-tRNA(Ile) + AMP + diphosphate</text>
        <dbReference type="Rhea" id="RHEA:11060"/>
        <dbReference type="Rhea" id="RHEA-COMP:9666"/>
        <dbReference type="Rhea" id="RHEA-COMP:9695"/>
        <dbReference type="ChEBI" id="CHEBI:30616"/>
        <dbReference type="ChEBI" id="CHEBI:33019"/>
        <dbReference type="ChEBI" id="CHEBI:58045"/>
        <dbReference type="ChEBI" id="CHEBI:78442"/>
        <dbReference type="ChEBI" id="CHEBI:78528"/>
        <dbReference type="ChEBI" id="CHEBI:456215"/>
        <dbReference type="EC" id="6.1.1.5"/>
    </reaction>
</comment>
<comment type="cofactor">
    <cofactor evidence="1">
        <name>Zn(2+)</name>
        <dbReference type="ChEBI" id="CHEBI:29105"/>
    </cofactor>
    <text evidence="1">Binds 1 zinc ion per subunit.</text>
</comment>
<comment type="subunit">
    <text evidence="1">Monomer.</text>
</comment>
<comment type="subcellular location">
    <subcellularLocation>
        <location evidence="1">Cytoplasm</location>
    </subcellularLocation>
</comment>
<comment type="domain">
    <text evidence="1">IleRS has two distinct active sites: one for aminoacylation and one for editing. The misactivated valine is translocated from the active site to the editing site, which sterically excludes the correctly activated isoleucine. The single editing site contains two valyl binding pockets, one specific for each substrate (Val-AMP or Val-tRNA(Ile)).</text>
</comment>
<comment type="similarity">
    <text evidence="1">Belongs to the class-I aminoacyl-tRNA synthetase family. IleS type 1 subfamily.</text>
</comment>
<accession>Q1GAS8</accession>
<name>SYI_LACDA</name>
<protein>
    <recommendedName>
        <fullName evidence="1">Isoleucine--tRNA ligase</fullName>
        <ecNumber evidence="1">6.1.1.5</ecNumber>
    </recommendedName>
    <alternativeName>
        <fullName evidence="1">Isoleucyl-tRNA synthetase</fullName>
        <shortName evidence="1">IleRS</shortName>
    </alternativeName>
</protein>
<sequence>MRVKDTLNLGKTKFPMRGNLPKREAEWEKNWEDQKFYERRLKLNEGHERFDLHDGPPFANGNIHMGHALNKITKDIIVRSKNMEGYYAPYVPGWDTHGLPIEQQLTKQGVDRKTMDRAAYRELCRKFAMEQVEKQRTDFKRLGVMGDWDHPYITLLPEFEAAEIRVFGKMYENGYIYQGKKPVYWSWSSESTLAEAEVEYHDVESPSIYISFPVKDGKGKLSEENTYFLIWTTTPWTIPSNQGIAVNPKFDYSVVEVGDRRYVVGTDRLSAVAEILGWDSYKTVQHLKGTDMEYMVAKHPYIEGRDSLLMEAVYVTDDDGTGLVHTASGFGEDDYNTAMRYGFDVLSPMDNKGCFTEEIPDPDLVGKFYTDTNEIVKDKLSAAGNLLHYSTFVHSAAHDWRTKKPVVYRATTQWFASISKFRDQILDQIEKTTFYPAWGKTRLYNMIKDRGDWVISRQRAWGVPLPIFYAEDGTAIVTHETIEHVADLFAKEGSNAWFTHPVEELLPEGFTSEHSPNGKFTKETDILDVWFDSGSSWSGVQALGRAVHYPTSMYLEGSDQYRGWFNSSLITSVATNGVAPYKSVLSQGFTLDGQGRKMSKSLGNTIAPNDVIKQMGAEIIRLWVASVDASGDVGVSMDILRQVSEGYRKIRNTFRYMLANTADFDPEKDRVAYKDLCKIDQYLEVKLNDLVAESIVNYDKYDFADVYKLVFKFITNDLSAFYLDFAKDVLYIEGKDSHARRSMQTVIYDAAVKLAKILAPILPHTMGEVWGYLKEKEEDVYLSNFPEIEDYADADDLKESWGEFMKLRDDVLKALEEARDQKLIGKSFEASVTVYPGEAAKAALDKLAGEDFREILIVSNLVMGQGEVPAEAKQFDQASVLVRRAEGEVCPRCRMYRTDLGADSRLPQLCGRCASIVAGDHPEILEEGLED</sequence>
<dbReference type="EC" id="6.1.1.5" evidence="1"/>
<dbReference type="EMBL" id="CR954253">
    <property type="protein sequence ID" value="CAI97575.1"/>
    <property type="molecule type" value="Genomic_DNA"/>
</dbReference>
<dbReference type="RefSeq" id="WP_011543780.1">
    <property type="nucleotide sequence ID" value="NC_008054.1"/>
</dbReference>
<dbReference type="SMR" id="Q1GAS8"/>
<dbReference type="STRING" id="390333.Ldb0748"/>
<dbReference type="KEGG" id="ldb:Ldb0748"/>
<dbReference type="PATRIC" id="fig|390333.13.peg.51"/>
<dbReference type="eggNOG" id="COG0060">
    <property type="taxonomic scope" value="Bacteria"/>
</dbReference>
<dbReference type="HOGENOM" id="CLU_001493_7_1_9"/>
<dbReference type="BioCyc" id="LDEL390333:LDB_RS03285-MONOMER"/>
<dbReference type="Proteomes" id="UP000001259">
    <property type="component" value="Chromosome"/>
</dbReference>
<dbReference type="GO" id="GO:0005829">
    <property type="term" value="C:cytosol"/>
    <property type="evidence" value="ECO:0007669"/>
    <property type="project" value="TreeGrafter"/>
</dbReference>
<dbReference type="GO" id="GO:0002161">
    <property type="term" value="F:aminoacyl-tRNA deacylase activity"/>
    <property type="evidence" value="ECO:0007669"/>
    <property type="project" value="InterPro"/>
</dbReference>
<dbReference type="GO" id="GO:0005524">
    <property type="term" value="F:ATP binding"/>
    <property type="evidence" value="ECO:0007669"/>
    <property type="project" value="UniProtKB-UniRule"/>
</dbReference>
<dbReference type="GO" id="GO:0004822">
    <property type="term" value="F:isoleucine-tRNA ligase activity"/>
    <property type="evidence" value="ECO:0007669"/>
    <property type="project" value="UniProtKB-UniRule"/>
</dbReference>
<dbReference type="GO" id="GO:0000049">
    <property type="term" value="F:tRNA binding"/>
    <property type="evidence" value="ECO:0007669"/>
    <property type="project" value="InterPro"/>
</dbReference>
<dbReference type="GO" id="GO:0008270">
    <property type="term" value="F:zinc ion binding"/>
    <property type="evidence" value="ECO:0007669"/>
    <property type="project" value="UniProtKB-UniRule"/>
</dbReference>
<dbReference type="GO" id="GO:0006428">
    <property type="term" value="P:isoleucyl-tRNA aminoacylation"/>
    <property type="evidence" value="ECO:0007669"/>
    <property type="project" value="UniProtKB-UniRule"/>
</dbReference>
<dbReference type="CDD" id="cd07960">
    <property type="entry name" value="Anticodon_Ia_Ile_BEm"/>
    <property type="match status" value="1"/>
</dbReference>
<dbReference type="CDD" id="cd00818">
    <property type="entry name" value="IleRS_core"/>
    <property type="match status" value="1"/>
</dbReference>
<dbReference type="FunFam" id="1.10.730.20:FF:000001">
    <property type="entry name" value="Isoleucine--tRNA ligase"/>
    <property type="match status" value="1"/>
</dbReference>
<dbReference type="FunFam" id="3.40.50.620:FF:000152">
    <property type="entry name" value="Isoleucine--tRNA ligase"/>
    <property type="match status" value="1"/>
</dbReference>
<dbReference type="Gene3D" id="1.10.730.20">
    <property type="match status" value="1"/>
</dbReference>
<dbReference type="Gene3D" id="3.40.50.620">
    <property type="entry name" value="HUPs"/>
    <property type="match status" value="2"/>
</dbReference>
<dbReference type="Gene3D" id="1.10.10.830">
    <property type="entry name" value="Ile-tRNA synthetase CP2 domain-like"/>
    <property type="match status" value="1"/>
</dbReference>
<dbReference type="Gene3D" id="3.90.740.10">
    <property type="entry name" value="Valyl/Leucyl/Isoleucyl-tRNA synthetase, editing domain"/>
    <property type="match status" value="1"/>
</dbReference>
<dbReference type="HAMAP" id="MF_02002">
    <property type="entry name" value="Ile_tRNA_synth_type1"/>
    <property type="match status" value="1"/>
</dbReference>
<dbReference type="InterPro" id="IPR001412">
    <property type="entry name" value="aa-tRNA-synth_I_CS"/>
</dbReference>
<dbReference type="InterPro" id="IPR002300">
    <property type="entry name" value="aa-tRNA-synth_Ia"/>
</dbReference>
<dbReference type="InterPro" id="IPR033708">
    <property type="entry name" value="Anticodon_Ile_BEm"/>
</dbReference>
<dbReference type="InterPro" id="IPR002301">
    <property type="entry name" value="Ile-tRNA-ligase"/>
</dbReference>
<dbReference type="InterPro" id="IPR023585">
    <property type="entry name" value="Ile-tRNA-ligase_type1"/>
</dbReference>
<dbReference type="InterPro" id="IPR050081">
    <property type="entry name" value="Ile-tRNA_ligase"/>
</dbReference>
<dbReference type="InterPro" id="IPR013155">
    <property type="entry name" value="M/V/L/I-tRNA-synth_anticd-bd"/>
</dbReference>
<dbReference type="InterPro" id="IPR014729">
    <property type="entry name" value="Rossmann-like_a/b/a_fold"/>
</dbReference>
<dbReference type="InterPro" id="IPR009080">
    <property type="entry name" value="tRNAsynth_Ia_anticodon-bd"/>
</dbReference>
<dbReference type="InterPro" id="IPR009008">
    <property type="entry name" value="Val/Leu/Ile-tRNA-synth_edit"/>
</dbReference>
<dbReference type="InterPro" id="IPR010663">
    <property type="entry name" value="Znf_FPG/IleRS"/>
</dbReference>
<dbReference type="NCBIfam" id="TIGR00392">
    <property type="entry name" value="ileS"/>
    <property type="match status" value="1"/>
</dbReference>
<dbReference type="PANTHER" id="PTHR42765:SF1">
    <property type="entry name" value="ISOLEUCINE--TRNA LIGASE, MITOCHONDRIAL"/>
    <property type="match status" value="1"/>
</dbReference>
<dbReference type="PANTHER" id="PTHR42765">
    <property type="entry name" value="SOLEUCYL-TRNA SYNTHETASE"/>
    <property type="match status" value="1"/>
</dbReference>
<dbReference type="Pfam" id="PF08264">
    <property type="entry name" value="Anticodon_1"/>
    <property type="match status" value="1"/>
</dbReference>
<dbReference type="Pfam" id="PF00133">
    <property type="entry name" value="tRNA-synt_1"/>
    <property type="match status" value="1"/>
</dbReference>
<dbReference type="Pfam" id="PF06827">
    <property type="entry name" value="zf-FPG_IleRS"/>
    <property type="match status" value="1"/>
</dbReference>
<dbReference type="PRINTS" id="PR00984">
    <property type="entry name" value="TRNASYNTHILE"/>
</dbReference>
<dbReference type="SUPFAM" id="SSF47323">
    <property type="entry name" value="Anticodon-binding domain of a subclass of class I aminoacyl-tRNA synthetases"/>
    <property type="match status" value="1"/>
</dbReference>
<dbReference type="SUPFAM" id="SSF52374">
    <property type="entry name" value="Nucleotidylyl transferase"/>
    <property type="match status" value="1"/>
</dbReference>
<dbReference type="SUPFAM" id="SSF50677">
    <property type="entry name" value="ValRS/IleRS/LeuRS editing domain"/>
    <property type="match status" value="1"/>
</dbReference>
<dbReference type="PROSITE" id="PS00178">
    <property type="entry name" value="AA_TRNA_LIGASE_I"/>
    <property type="match status" value="1"/>
</dbReference>